<gene>
    <name evidence="1" type="primary">atpD</name>
    <name type="ordered locus">R03034</name>
    <name type="ORF">SMc02501</name>
</gene>
<proteinExistence type="inferred from homology"/>
<feature type="chain" id="PRO_0000254353" description="ATP synthase subunit beta">
    <location>
        <begin position="1"/>
        <end position="504"/>
    </location>
</feature>
<feature type="region of interest" description="Disordered" evidence="2">
    <location>
        <begin position="1"/>
        <end position="23"/>
    </location>
</feature>
<feature type="binding site" evidence="1">
    <location>
        <begin position="182"/>
        <end position="189"/>
    </location>
    <ligand>
        <name>ATP</name>
        <dbReference type="ChEBI" id="CHEBI:30616"/>
    </ligand>
</feature>
<evidence type="ECO:0000255" key="1">
    <source>
        <dbReference type="HAMAP-Rule" id="MF_01347"/>
    </source>
</evidence>
<evidence type="ECO:0000256" key="2">
    <source>
        <dbReference type="SAM" id="MobiDB-lite"/>
    </source>
</evidence>
<reference key="1">
    <citation type="journal article" date="2001" name="Proc. Natl. Acad. Sci. U.S.A.">
        <title>Analysis of the chromosome sequence of the legume symbiont Sinorhizobium meliloti strain 1021.</title>
        <authorList>
            <person name="Capela D."/>
            <person name="Barloy-Hubler F."/>
            <person name="Gouzy J."/>
            <person name="Bothe G."/>
            <person name="Ampe F."/>
            <person name="Batut J."/>
            <person name="Boistard P."/>
            <person name="Becker A."/>
            <person name="Boutry M."/>
            <person name="Cadieu E."/>
            <person name="Dreano S."/>
            <person name="Gloux S."/>
            <person name="Godrie T."/>
            <person name="Goffeau A."/>
            <person name="Kahn D."/>
            <person name="Kiss E."/>
            <person name="Lelaure V."/>
            <person name="Masuy D."/>
            <person name="Pohl T."/>
            <person name="Portetelle D."/>
            <person name="Puehler A."/>
            <person name="Purnelle B."/>
            <person name="Ramsperger U."/>
            <person name="Renard C."/>
            <person name="Thebault P."/>
            <person name="Vandenbol M."/>
            <person name="Weidner S."/>
            <person name="Galibert F."/>
        </authorList>
    </citation>
    <scope>NUCLEOTIDE SEQUENCE [LARGE SCALE GENOMIC DNA]</scope>
    <source>
        <strain>1021</strain>
    </source>
</reference>
<reference key="2">
    <citation type="journal article" date="2001" name="Science">
        <title>The composite genome of the legume symbiont Sinorhizobium meliloti.</title>
        <authorList>
            <person name="Galibert F."/>
            <person name="Finan T.M."/>
            <person name="Long S.R."/>
            <person name="Puehler A."/>
            <person name="Abola P."/>
            <person name="Ampe F."/>
            <person name="Barloy-Hubler F."/>
            <person name="Barnett M.J."/>
            <person name="Becker A."/>
            <person name="Boistard P."/>
            <person name="Bothe G."/>
            <person name="Boutry M."/>
            <person name="Bowser L."/>
            <person name="Buhrmester J."/>
            <person name="Cadieu E."/>
            <person name="Capela D."/>
            <person name="Chain P."/>
            <person name="Cowie A."/>
            <person name="Davis R.W."/>
            <person name="Dreano S."/>
            <person name="Federspiel N.A."/>
            <person name="Fisher R.F."/>
            <person name="Gloux S."/>
            <person name="Godrie T."/>
            <person name="Goffeau A."/>
            <person name="Golding B."/>
            <person name="Gouzy J."/>
            <person name="Gurjal M."/>
            <person name="Hernandez-Lucas I."/>
            <person name="Hong A."/>
            <person name="Huizar L."/>
            <person name="Hyman R.W."/>
            <person name="Jones T."/>
            <person name="Kahn D."/>
            <person name="Kahn M.L."/>
            <person name="Kalman S."/>
            <person name="Keating D.H."/>
            <person name="Kiss E."/>
            <person name="Komp C."/>
            <person name="Lelaure V."/>
            <person name="Masuy D."/>
            <person name="Palm C."/>
            <person name="Peck M.C."/>
            <person name="Pohl T.M."/>
            <person name="Portetelle D."/>
            <person name="Purnelle B."/>
            <person name="Ramsperger U."/>
            <person name="Surzycki R."/>
            <person name="Thebault P."/>
            <person name="Vandenbol M."/>
            <person name="Vorhoelter F.J."/>
            <person name="Weidner S."/>
            <person name="Wells D.H."/>
            <person name="Wong K."/>
            <person name="Yeh K.-C."/>
            <person name="Batut J."/>
        </authorList>
    </citation>
    <scope>NUCLEOTIDE SEQUENCE [LARGE SCALE GENOMIC DNA]</scope>
    <source>
        <strain>1021</strain>
    </source>
</reference>
<protein>
    <recommendedName>
        <fullName evidence="1">ATP synthase subunit beta</fullName>
        <ecNumber evidence="1">7.1.2.2</ecNumber>
    </recommendedName>
    <alternativeName>
        <fullName evidence="1">ATP synthase F1 sector subunit beta</fullName>
    </alternativeName>
    <alternativeName>
        <fullName evidence="1">F-ATPase subunit beta</fullName>
    </alternativeName>
</protein>
<name>ATPB_RHIME</name>
<sequence>MAKAATPKETAAAKKPAAPKKAASAKTVVAATGAVGRVTQVIGAVVDVAFEEGQLPQILNALETDNNGNRLVLEVAQHLGENSVRTIAMDSTEGLVRGQKVADTGGPIAVPVGKETLGRIMNVIGEPVDEAGPLKTSARRAIHQEAPAYVDQSTEAQILVTGIKVVDLLAPYAKGGKIGLFGGAGVGKTVLIMELINNVAKAHGGYSVFAGVGERTREGNDLYHEMIESGVNKHGGGEGSKAALVYGQMNEPPGARARVALTGLTVAEQFRDEGQDVLFFVDNIFRFTQAGSEVSALLGRIPSAVGYQPTLATDMGQMQERITTTTKGSITSVQAIYVPADDLTDPAPATSFAHLDATTVLSRSIAEKGIYPAVDPLDSTSRMLDPMIVGEEHYEVSRKVQSTLQRYKALQDIIAILGMDELSEEDKIAVARARKIERFLSQPFFVAEVFTGSPGKLVALEDTIKGFKGLVNGEYDHLPEAAFYMVGSIEEAVEKAKKLAAEAA</sequence>
<accession>Q92LK8</accession>
<comment type="function">
    <text evidence="1">Produces ATP from ADP in the presence of a proton gradient across the membrane. The catalytic sites are hosted primarily by the beta subunits.</text>
</comment>
<comment type="catalytic activity">
    <reaction evidence="1">
        <text>ATP + H2O + 4 H(+)(in) = ADP + phosphate + 5 H(+)(out)</text>
        <dbReference type="Rhea" id="RHEA:57720"/>
        <dbReference type="ChEBI" id="CHEBI:15377"/>
        <dbReference type="ChEBI" id="CHEBI:15378"/>
        <dbReference type="ChEBI" id="CHEBI:30616"/>
        <dbReference type="ChEBI" id="CHEBI:43474"/>
        <dbReference type="ChEBI" id="CHEBI:456216"/>
        <dbReference type="EC" id="7.1.2.2"/>
    </reaction>
</comment>
<comment type="subunit">
    <text evidence="1">F-type ATPases have 2 components, CF(1) - the catalytic core - and CF(0) - the membrane proton channel. CF(1) has five subunits: alpha(3), beta(3), gamma(1), delta(1), epsilon(1). CF(0) has three main subunits: a(1), b(2) and c(9-12). The alpha and beta chains form an alternating ring which encloses part of the gamma chain. CF(1) is attached to CF(0) by a central stalk formed by the gamma and epsilon chains, while a peripheral stalk is formed by the delta and b chains.</text>
</comment>
<comment type="subcellular location">
    <subcellularLocation>
        <location evidence="1">Cell inner membrane</location>
        <topology evidence="1">Peripheral membrane protein</topology>
    </subcellularLocation>
</comment>
<comment type="similarity">
    <text evidence="1">Belongs to the ATPase alpha/beta chains family.</text>
</comment>
<organism>
    <name type="scientific">Rhizobium meliloti (strain 1021)</name>
    <name type="common">Ensifer meliloti</name>
    <name type="synonym">Sinorhizobium meliloti</name>
    <dbReference type="NCBI Taxonomy" id="266834"/>
    <lineage>
        <taxon>Bacteria</taxon>
        <taxon>Pseudomonadati</taxon>
        <taxon>Pseudomonadota</taxon>
        <taxon>Alphaproteobacteria</taxon>
        <taxon>Hyphomicrobiales</taxon>
        <taxon>Rhizobiaceae</taxon>
        <taxon>Sinorhizobium/Ensifer group</taxon>
        <taxon>Sinorhizobium</taxon>
    </lineage>
</organism>
<dbReference type="EC" id="7.1.2.2" evidence="1"/>
<dbReference type="EMBL" id="AL591688">
    <property type="protein sequence ID" value="CAC47613.1"/>
    <property type="molecule type" value="Genomic_DNA"/>
</dbReference>
<dbReference type="RefSeq" id="NP_387140.1">
    <property type="nucleotide sequence ID" value="NC_003047.1"/>
</dbReference>
<dbReference type="RefSeq" id="WP_003530302.1">
    <property type="nucleotide sequence ID" value="NC_003047.1"/>
</dbReference>
<dbReference type="SMR" id="Q92LK8"/>
<dbReference type="EnsemblBacteria" id="CAC47613">
    <property type="protein sequence ID" value="CAC47613"/>
    <property type="gene ID" value="SMc02501"/>
</dbReference>
<dbReference type="GeneID" id="89574054"/>
<dbReference type="KEGG" id="sme:SMc02501"/>
<dbReference type="PATRIC" id="fig|266834.11.peg.4567"/>
<dbReference type="eggNOG" id="COG0055">
    <property type="taxonomic scope" value="Bacteria"/>
</dbReference>
<dbReference type="HOGENOM" id="CLU_022398_0_2_5"/>
<dbReference type="OrthoDB" id="9801639at2"/>
<dbReference type="Proteomes" id="UP000001976">
    <property type="component" value="Chromosome"/>
</dbReference>
<dbReference type="GO" id="GO:0005886">
    <property type="term" value="C:plasma membrane"/>
    <property type="evidence" value="ECO:0007669"/>
    <property type="project" value="UniProtKB-SubCell"/>
</dbReference>
<dbReference type="GO" id="GO:0045259">
    <property type="term" value="C:proton-transporting ATP synthase complex"/>
    <property type="evidence" value="ECO:0007669"/>
    <property type="project" value="UniProtKB-KW"/>
</dbReference>
<dbReference type="GO" id="GO:0005524">
    <property type="term" value="F:ATP binding"/>
    <property type="evidence" value="ECO:0007669"/>
    <property type="project" value="UniProtKB-UniRule"/>
</dbReference>
<dbReference type="GO" id="GO:0016887">
    <property type="term" value="F:ATP hydrolysis activity"/>
    <property type="evidence" value="ECO:0007669"/>
    <property type="project" value="InterPro"/>
</dbReference>
<dbReference type="GO" id="GO:0046933">
    <property type="term" value="F:proton-transporting ATP synthase activity, rotational mechanism"/>
    <property type="evidence" value="ECO:0007669"/>
    <property type="project" value="UniProtKB-UniRule"/>
</dbReference>
<dbReference type="CDD" id="cd18110">
    <property type="entry name" value="ATP-synt_F1_beta_C"/>
    <property type="match status" value="1"/>
</dbReference>
<dbReference type="CDD" id="cd18115">
    <property type="entry name" value="ATP-synt_F1_beta_N"/>
    <property type="match status" value="1"/>
</dbReference>
<dbReference type="CDD" id="cd01133">
    <property type="entry name" value="F1-ATPase_beta_CD"/>
    <property type="match status" value="1"/>
</dbReference>
<dbReference type="FunFam" id="1.10.1140.10:FF:000001">
    <property type="entry name" value="ATP synthase subunit beta"/>
    <property type="match status" value="1"/>
</dbReference>
<dbReference type="FunFam" id="2.40.10.170:FF:000005">
    <property type="entry name" value="ATP synthase subunit beta"/>
    <property type="match status" value="1"/>
</dbReference>
<dbReference type="FunFam" id="3.40.50.300:FF:000026">
    <property type="entry name" value="ATP synthase subunit beta"/>
    <property type="match status" value="1"/>
</dbReference>
<dbReference type="Gene3D" id="2.40.10.170">
    <property type="match status" value="1"/>
</dbReference>
<dbReference type="Gene3D" id="1.10.1140.10">
    <property type="entry name" value="Bovine Mitochondrial F1-atpase, Atp Synthase Beta Chain, Chain D, domain 3"/>
    <property type="match status" value="1"/>
</dbReference>
<dbReference type="Gene3D" id="3.40.50.300">
    <property type="entry name" value="P-loop containing nucleotide triphosphate hydrolases"/>
    <property type="match status" value="1"/>
</dbReference>
<dbReference type="HAMAP" id="MF_01347">
    <property type="entry name" value="ATP_synth_beta_bact"/>
    <property type="match status" value="1"/>
</dbReference>
<dbReference type="InterPro" id="IPR003593">
    <property type="entry name" value="AAA+_ATPase"/>
</dbReference>
<dbReference type="InterPro" id="IPR055190">
    <property type="entry name" value="ATP-synt_VA_C"/>
</dbReference>
<dbReference type="InterPro" id="IPR005722">
    <property type="entry name" value="ATP_synth_F1_bsu"/>
</dbReference>
<dbReference type="InterPro" id="IPR020003">
    <property type="entry name" value="ATPase_a/bsu_AS"/>
</dbReference>
<dbReference type="InterPro" id="IPR050053">
    <property type="entry name" value="ATPase_alpha/beta_chains"/>
</dbReference>
<dbReference type="InterPro" id="IPR004100">
    <property type="entry name" value="ATPase_F1/V1/A1_a/bsu_N"/>
</dbReference>
<dbReference type="InterPro" id="IPR036121">
    <property type="entry name" value="ATPase_F1/V1/A1_a/bsu_N_sf"/>
</dbReference>
<dbReference type="InterPro" id="IPR000194">
    <property type="entry name" value="ATPase_F1/V1/A1_a/bsu_nucl-bd"/>
</dbReference>
<dbReference type="InterPro" id="IPR024034">
    <property type="entry name" value="ATPase_F1/V1_b/a_C"/>
</dbReference>
<dbReference type="InterPro" id="IPR027417">
    <property type="entry name" value="P-loop_NTPase"/>
</dbReference>
<dbReference type="NCBIfam" id="TIGR01039">
    <property type="entry name" value="atpD"/>
    <property type="match status" value="1"/>
</dbReference>
<dbReference type="PANTHER" id="PTHR15184">
    <property type="entry name" value="ATP SYNTHASE"/>
    <property type="match status" value="1"/>
</dbReference>
<dbReference type="PANTHER" id="PTHR15184:SF71">
    <property type="entry name" value="ATP SYNTHASE SUBUNIT BETA, MITOCHONDRIAL"/>
    <property type="match status" value="1"/>
</dbReference>
<dbReference type="Pfam" id="PF00006">
    <property type="entry name" value="ATP-synt_ab"/>
    <property type="match status" value="1"/>
</dbReference>
<dbReference type="Pfam" id="PF02874">
    <property type="entry name" value="ATP-synt_ab_N"/>
    <property type="match status" value="1"/>
</dbReference>
<dbReference type="Pfam" id="PF22919">
    <property type="entry name" value="ATP-synt_VA_C"/>
    <property type="match status" value="1"/>
</dbReference>
<dbReference type="PIRSF" id="PIRSF039072">
    <property type="entry name" value="ATPase_subunit_beta"/>
    <property type="match status" value="1"/>
</dbReference>
<dbReference type="SMART" id="SM00382">
    <property type="entry name" value="AAA"/>
    <property type="match status" value="1"/>
</dbReference>
<dbReference type="SUPFAM" id="SSF47917">
    <property type="entry name" value="C-terminal domain of alpha and beta subunits of F1 ATP synthase"/>
    <property type="match status" value="1"/>
</dbReference>
<dbReference type="SUPFAM" id="SSF50615">
    <property type="entry name" value="N-terminal domain of alpha and beta subunits of F1 ATP synthase"/>
    <property type="match status" value="1"/>
</dbReference>
<dbReference type="SUPFAM" id="SSF52540">
    <property type="entry name" value="P-loop containing nucleoside triphosphate hydrolases"/>
    <property type="match status" value="1"/>
</dbReference>
<dbReference type="PROSITE" id="PS00152">
    <property type="entry name" value="ATPASE_ALPHA_BETA"/>
    <property type="match status" value="1"/>
</dbReference>
<keyword id="KW-0066">ATP synthesis</keyword>
<keyword id="KW-0067">ATP-binding</keyword>
<keyword id="KW-0997">Cell inner membrane</keyword>
<keyword id="KW-1003">Cell membrane</keyword>
<keyword id="KW-0139">CF(1)</keyword>
<keyword id="KW-0375">Hydrogen ion transport</keyword>
<keyword id="KW-0406">Ion transport</keyword>
<keyword id="KW-0472">Membrane</keyword>
<keyword id="KW-0547">Nucleotide-binding</keyword>
<keyword id="KW-1185">Reference proteome</keyword>
<keyword id="KW-1278">Translocase</keyword>
<keyword id="KW-0813">Transport</keyword>